<comment type="function">
    <text evidence="1">Part of the Sec protein translocase complex. Interacts with the SecYEG preprotein conducting channel. Has a central role in coupling the hydrolysis of ATP to the transfer of proteins into and across the cell membrane, serving as an ATP-driven molecular motor driving the stepwise translocation of polypeptide chains across the membrane.</text>
</comment>
<comment type="catalytic activity">
    <reaction evidence="1">
        <text>ATP + H2O + cellular proteinSide 1 = ADP + phosphate + cellular proteinSide 2.</text>
        <dbReference type="EC" id="7.4.2.8"/>
    </reaction>
</comment>
<comment type="subunit">
    <text evidence="1">Monomer and homodimer. Part of the essential Sec protein translocation apparatus which comprises SecA, SecYEG and auxiliary proteins SecDF. Other proteins may also be involved.</text>
</comment>
<comment type="subcellular location">
    <subcellularLocation>
        <location evidence="1">Cell membrane</location>
        <topology evidence="1">Peripheral membrane protein</topology>
        <orientation evidence="1">Cytoplasmic side</orientation>
    </subcellularLocation>
    <subcellularLocation>
        <location evidence="1">Cytoplasm</location>
    </subcellularLocation>
    <text evidence="1">Distribution is 50-50.</text>
</comment>
<comment type="similarity">
    <text evidence="1">Belongs to the SecA family.</text>
</comment>
<feature type="chain" id="PRO_1000073475" description="Protein translocase subunit SecA">
    <location>
        <begin position="1"/>
        <end position="799"/>
    </location>
</feature>
<feature type="binding site" evidence="1">
    <location>
        <position position="85"/>
    </location>
    <ligand>
        <name>ATP</name>
        <dbReference type="ChEBI" id="CHEBI:30616"/>
    </ligand>
</feature>
<feature type="binding site" evidence="1">
    <location>
        <begin position="103"/>
        <end position="107"/>
    </location>
    <ligand>
        <name>ATP</name>
        <dbReference type="ChEBI" id="CHEBI:30616"/>
    </ligand>
</feature>
<feature type="binding site" evidence="1">
    <location>
        <position position="504"/>
    </location>
    <ligand>
        <name>ATP</name>
        <dbReference type="ChEBI" id="CHEBI:30616"/>
    </ligand>
</feature>
<accession>Q5FL75</accession>
<name>SECA_LACAC</name>
<gene>
    <name evidence="1" type="primary">secA</name>
    <name type="ordered locus">LBA0673</name>
</gene>
<sequence length="799" mass="91555">MANILKKLYNTDKRELKKFEKYATKVEEHADEMSKLSDEQLQAKTPEFRERIKNGESLDDLLPEAFAVAREGAKRVLGLYPFHVQILGGIALHFGNIAEMMTGEGKTLTATMPVYLNALEGKGVHVVTVNEYLSSRDEEEMGQLYRWLGLTVGLNINSMSPDEKREAYNCDVTYSTNSELGFDYLRDNMVVYKEQMVQRPLNYAIIDEVDSILIDEARTPLIISGEAEQANSDYIRADRFVKTLTEDKSDDDADDDEDHGDYKIDWPTKTISLTRTGIEKACEHFGLKNLYDVENQKLVHHIDQALRANYIMLKDIDYVVQDGEVLIVDSFTGRVMEGRRYSDGLHQAIEAKEGVKIQEESRTQATITYQNFFRMYKKLSGMTGTGKTEEEEFREIYNMQVITIPTNRPIARKDMPDILYPTLDSKFHAVIEEIKKRHAKGQPVLVGTVAIESSERLSHLLDEANIPHAVLNAKNHAKEAQIIMNAGQRGAVTIATNMAGRGTDIKLGPGVKELGGLAVIGTERHESRRIDNQLRGRSGRQGDPGYTRFYLSLEDDLMKRFGGDRVKDFLDRLSDNDDEKVIESRLITRQVESAQKRVEGNNYDTRKQTLQYDDVMRIQREIIYGERMQVIEADKSLKNVLIPMIHRTINSQVDMFTQGDRSQWRLDSLRDFISSSLASEQVTDSIDFKTISVEDLKKKLYDIVEKNFEDKEKALGDPSQMLEFEKVVILRVVDDRWTDHIDAMDQLRQSIGLRGYGQLNPLVEYQDSGYRMFEEMISNIEFDVTRLFMKAEIRQNLSR</sequence>
<organism>
    <name type="scientific">Lactobacillus acidophilus (strain ATCC 700396 / NCK56 / N2 / NCFM)</name>
    <dbReference type="NCBI Taxonomy" id="272621"/>
    <lineage>
        <taxon>Bacteria</taxon>
        <taxon>Bacillati</taxon>
        <taxon>Bacillota</taxon>
        <taxon>Bacilli</taxon>
        <taxon>Lactobacillales</taxon>
        <taxon>Lactobacillaceae</taxon>
        <taxon>Lactobacillus</taxon>
    </lineage>
</organism>
<reference key="1">
    <citation type="journal article" date="2005" name="Proc. Natl. Acad. Sci. U.S.A.">
        <title>Complete genome sequence of the probiotic lactic acid bacterium Lactobacillus acidophilus NCFM.</title>
        <authorList>
            <person name="Altermann E."/>
            <person name="Russell W.M."/>
            <person name="Azcarate-Peril M.A."/>
            <person name="Barrangou R."/>
            <person name="Buck B.L."/>
            <person name="McAuliffe O."/>
            <person name="Souther N."/>
            <person name="Dobson A."/>
            <person name="Duong T."/>
            <person name="Callanan M."/>
            <person name="Lick S."/>
            <person name="Hamrick A."/>
            <person name="Cano R."/>
            <person name="Klaenhammer T.R."/>
        </authorList>
    </citation>
    <scope>NUCLEOTIDE SEQUENCE [LARGE SCALE GENOMIC DNA]</scope>
    <source>
        <strain>ATCC 700396 / NCK56 / N2 / NCFM</strain>
    </source>
</reference>
<protein>
    <recommendedName>
        <fullName evidence="1">Protein translocase subunit SecA</fullName>
        <ecNumber evidence="1">7.4.2.8</ecNumber>
    </recommendedName>
</protein>
<evidence type="ECO:0000255" key="1">
    <source>
        <dbReference type="HAMAP-Rule" id="MF_01382"/>
    </source>
</evidence>
<proteinExistence type="inferred from homology"/>
<keyword id="KW-0067">ATP-binding</keyword>
<keyword id="KW-1003">Cell membrane</keyword>
<keyword id="KW-0963">Cytoplasm</keyword>
<keyword id="KW-0472">Membrane</keyword>
<keyword id="KW-0547">Nucleotide-binding</keyword>
<keyword id="KW-0653">Protein transport</keyword>
<keyword id="KW-1185">Reference proteome</keyword>
<keyword id="KW-1278">Translocase</keyword>
<keyword id="KW-0811">Translocation</keyword>
<keyword id="KW-0813">Transport</keyword>
<dbReference type="EC" id="7.4.2.8" evidence="1"/>
<dbReference type="EMBL" id="CP000033">
    <property type="protein sequence ID" value="AAV42549.1"/>
    <property type="molecule type" value="Genomic_DNA"/>
</dbReference>
<dbReference type="RefSeq" id="WP_011254222.1">
    <property type="nucleotide sequence ID" value="NC_006814.3"/>
</dbReference>
<dbReference type="RefSeq" id="YP_193580.1">
    <property type="nucleotide sequence ID" value="NC_006814.3"/>
</dbReference>
<dbReference type="SMR" id="Q5FL75"/>
<dbReference type="STRING" id="272621.LBA0673"/>
<dbReference type="KEGG" id="lac:LBA0673"/>
<dbReference type="PATRIC" id="fig|272621.13.peg.643"/>
<dbReference type="eggNOG" id="COG0653">
    <property type="taxonomic scope" value="Bacteria"/>
</dbReference>
<dbReference type="HOGENOM" id="CLU_005314_3_2_9"/>
<dbReference type="OrthoDB" id="9805579at2"/>
<dbReference type="BioCyc" id="LACI272621:G1G49-695-MONOMER"/>
<dbReference type="Proteomes" id="UP000006381">
    <property type="component" value="Chromosome"/>
</dbReference>
<dbReference type="GO" id="GO:0031522">
    <property type="term" value="C:cell envelope Sec protein transport complex"/>
    <property type="evidence" value="ECO:0007669"/>
    <property type="project" value="TreeGrafter"/>
</dbReference>
<dbReference type="GO" id="GO:0005829">
    <property type="term" value="C:cytosol"/>
    <property type="evidence" value="ECO:0007669"/>
    <property type="project" value="TreeGrafter"/>
</dbReference>
<dbReference type="GO" id="GO:0005886">
    <property type="term" value="C:plasma membrane"/>
    <property type="evidence" value="ECO:0007669"/>
    <property type="project" value="UniProtKB-SubCell"/>
</dbReference>
<dbReference type="GO" id="GO:0005524">
    <property type="term" value="F:ATP binding"/>
    <property type="evidence" value="ECO:0007669"/>
    <property type="project" value="UniProtKB-UniRule"/>
</dbReference>
<dbReference type="GO" id="GO:0008564">
    <property type="term" value="F:protein-exporting ATPase activity"/>
    <property type="evidence" value="ECO:0007669"/>
    <property type="project" value="UniProtKB-EC"/>
</dbReference>
<dbReference type="GO" id="GO:0065002">
    <property type="term" value="P:intracellular protein transmembrane transport"/>
    <property type="evidence" value="ECO:0007669"/>
    <property type="project" value="UniProtKB-UniRule"/>
</dbReference>
<dbReference type="GO" id="GO:0017038">
    <property type="term" value="P:protein import"/>
    <property type="evidence" value="ECO:0007669"/>
    <property type="project" value="InterPro"/>
</dbReference>
<dbReference type="GO" id="GO:0006605">
    <property type="term" value="P:protein targeting"/>
    <property type="evidence" value="ECO:0007669"/>
    <property type="project" value="UniProtKB-UniRule"/>
</dbReference>
<dbReference type="GO" id="GO:0043952">
    <property type="term" value="P:protein transport by the Sec complex"/>
    <property type="evidence" value="ECO:0007669"/>
    <property type="project" value="TreeGrafter"/>
</dbReference>
<dbReference type="CDD" id="cd17928">
    <property type="entry name" value="DEXDc_SecA"/>
    <property type="match status" value="1"/>
</dbReference>
<dbReference type="CDD" id="cd18803">
    <property type="entry name" value="SF2_C_secA"/>
    <property type="match status" value="1"/>
</dbReference>
<dbReference type="FunFam" id="3.40.50.300:FF:000429">
    <property type="entry name" value="Preprotein translocase subunit SecA"/>
    <property type="match status" value="1"/>
</dbReference>
<dbReference type="FunFam" id="3.90.1440.10:FF:000001">
    <property type="entry name" value="Preprotein translocase subunit SecA"/>
    <property type="match status" value="1"/>
</dbReference>
<dbReference type="Gene3D" id="1.10.3060.10">
    <property type="entry name" value="Helical scaffold and wing domains of SecA"/>
    <property type="match status" value="1"/>
</dbReference>
<dbReference type="Gene3D" id="3.40.50.300">
    <property type="entry name" value="P-loop containing nucleotide triphosphate hydrolases"/>
    <property type="match status" value="3"/>
</dbReference>
<dbReference type="Gene3D" id="3.90.1440.10">
    <property type="entry name" value="SecA, preprotein cross-linking domain"/>
    <property type="match status" value="1"/>
</dbReference>
<dbReference type="HAMAP" id="MF_01382">
    <property type="entry name" value="SecA"/>
    <property type="match status" value="1"/>
</dbReference>
<dbReference type="InterPro" id="IPR014001">
    <property type="entry name" value="Helicase_ATP-bd"/>
</dbReference>
<dbReference type="InterPro" id="IPR001650">
    <property type="entry name" value="Helicase_C-like"/>
</dbReference>
<dbReference type="InterPro" id="IPR027417">
    <property type="entry name" value="P-loop_NTPase"/>
</dbReference>
<dbReference type="InterPro" id="IPR000185">
    <property type="entry name" value="SecA"/>
</dbReference>
<dbReference type="InterPro" id="IPR020937">
    <property type="entry name" value="SecA_CS"/>
</dbReference>
<dbReference type="InterPro" id="IPR011115">
    <property type="entry name" value="SecA_DEAD"/>
</dbReference>
<dbReference type="InterPro" id="IPR014018">
    <property type="entry name" value="SecA_motor_DEAD"/>
</dbReference>
<dbReference type="InterPro" id="IPR011130">
    <property type="entry name" value="SecA_preprotein_X-link_dom"/>
</dbReference>
<dbReference type="InterPro" id="IPR044722">
    <property type="entry name" value="SecA_SF2_C"/>
</dbReference>
<dbReference type="InterPro" id="IPR011116">
    <property type="entry name" value="SecA_Wing/Scaffold"/>
</dbReference>
<dbReference type="InterPro" id="IPR036266">
    <property type="entry name" value="SecA_Wing/Scaffold_sf"/>
</dbReference>
<dbReference type="InterPro" id="IPR036670">
    <property type="entry name" value="SecA_X-link_sf"/>
</dbReference>
<dbReference type="NCBIfam" id="NF006630">
    <property type="entry name" value="PRK09200.1"/>
    <property type="match status" value="1"/>
</dbReference>
<dbReference type="NCBIfam" id="NF009538">
    <property type="entry name" value="PRK12904.1"/>
    <property type="match status" value="1"/>
</dbReference>
<dbReference type="NCBIfam" id="TIGR00963">
    <property type="entry name" value="secA"/>
    <property type="match status" value="1"/>
</dbReference>
<dbReference type="PANTHER" id="PTHR30612:SF0">
    <property type="entry name" value="CHLOROPLAST PROTEIN-TRANSPORTING ATPASE"/>
    <property type="match status" value="1"/>
</dbReference>
<dbReference type="PANTHER" id="PTHR30612">
    <property type="entry name" value="SECA INNER MEMBRANE COMPONENT OF SEC PROTEIN SECRETION SYSTEM"/>
    <property type="match status" value="1"/>
</dbReference>
<dbReference type="Pfam" id="PF21090">
    <property type="entry name" value="P-loop_SecA"/>
    <property type="match status" value="2"/>
</dbReference>
<dbReference type="Pfam" id="PF07517">
    <property type="entry name" value="SecA_DEAD"/>
    <property type="match status" value="1"/>
</dbReference>
<dbReference type="Pfam" id="PF01043">
    <property type="entry name" value="SecA_PP_bind"/>
    <property type="match status" value="1"/>
</dbReference>
<dbReference type="Pfam" id="PF07516">
    <property type="entry name" value="SecA_SW"/>
    <property type="match status" value="1"/>
</dbReference>
<dbReference type="PRINTS" id="PR00906">
    <property type="entry name" value="SECA"/>
</dbReference>
<dbReference type="SMART" id="SM00957">
    <property type="entry name" value="SecA_DEAD"/>
    <property type="match status" value="1"/>
</dbReference>
<dbReference type="SMART" id="SM00958">
    <property type="entry name" value="SecA_PP_bind"/>
    <property type="match status" value="1"/>
</dbReference>
<dbReference type="SUPFAM" id="SSF81886">
    <property type="entry name" value="Helical scaffold and wing domains of SecA"/>
    <property type="match status" value="1"/>
</dbReference>
<dbReference type="SUPFAM" id="SSF52540">
    <property type="entry name" value="P-loop containing nucleoside triphosphate hydrolases"/>
    <property type="match status" value="2"/>
</dbReference>
<dbReference type="SUPFAM" id="SSF81767">
    <property type="entry name" value="Pre-protein crosslinking domain of SecA"/>
    <property type="match status" value="1"/>
</dbReference>
<dbReference type="PROSITE" id="PS01312">
    <property type="entry name" value="SECA"/>
    <property type="match status" value="1"/>
</dbReference>
<dbReference type="PROSITE" id="PS51196">
    <property type="entry name" value="SECA_MOTOR_DEAD"/>
    <property type="match status" value="1"/>
</dbReference>